<reference key="1">
    <citation type="journal article" date="2018" name="J. Proteomics">
        <title>Profiling the short, linear, non-disulfide bond-containing peptidome from the venom of the scorpion Tityus obscurus.</title>
        <authorList>
            <person name="Dias N.B."/>
            <person name="de Souza B.M."/>
            <person name="Cocchi F.K."/>
            <person name="Chalkidis H.M."/>
            <person name="Dorce V.A.C."/>
            <person name="Palma M.S."/>
        </authorList>
    </citation>
    <scope>PROTEIN SEQUENCE</scope>
    <scope>IDENTIFICATION BY MASS SPECTROMETRY</scope>
    <scope>MASS SPECTROMETRY</scope>
    <scope>SUBCELLULAR LOCATION</scope>
    <source>
        <tissue>Venom</tissue>
    </source>
</reference>
<evidence type="ECO:0000269" key="1">
    <source>
    </source>
</evidence>
<evidence type="ECO:0000303" key="2">
    <source>
    </source>
</evidence>
<evidence type="ECO:0000305" key="3">
    <source>
    </source>
</evidence>
<dbReference type="GO" id="GO:0005576">
    <property type="term" value="C:extracellular region"/>
    <property type="evidence" value="ECO:0007669"/>
    <property type="project" value="UniProtKB-SubCell"/>
</dbReference>
<feature type="peptide" id="PRO_0000461755" description="Cryptide Pep-20" evidence="1">
    <location>
        <begin position="1"/>
        <end position="7"/>
    </location>
</feature>
<name>CRY20_TITOB</name>
<accession>P0DRG5</accession>
<keyword id="KW-0903">Direct protein sequencing</keyword>
<keyword id="KW-0964">Secreted</keyword>
<protein>
    <recommendedName>
        <fullName evidence="2">Cryptide Pep-20</fullName>
    </recommendedName>
</protein>
<organism>
    <name type="scientific">Tityus obscurus</name>
    <name type="common">Amazonian scorpion</name>
    <name type="synonym">Tityus cambridgei</name>
    <dbReference type="NCBI Taxonomy" id="1221240"/>
    <lineage>
        <taxon>Eukaryota</taxon>
        <taxon>Metazoa</taxon>
        <taxon>Ecdysozoa</taxon>
        <taxon>Arthropoda</taxon>
        <taxon>Chelicerata</taxon>
        <taxon>Arachnida</taxon>
        <taxon>Scorpiones</taxon>
        <taxon>Buthida</taxon>
        <taxon>Buthoidea</taxon>
        <taxon>Buthidae</taxon>
        <taxon>Tityus</taxon>
    </lineage>
</organism>
<proteinExistence type="evidence at protein level"/>
<comment type="subcellular location">
    <subcellularLocation>
        <location evidence="1">Secreted</location>
    </subcellularLocation>
</comment>
<comment type="tissue specificity">
    <text evidence="3">Expressed by the venom gland.</text>
</comment>
<comment type="mass spectrometry" mass="820.46" method="Electrospray" evidence="1"/>
<sequence length="7" mass="821">HERLLGP</sequence>